<comment type="function">
    <text evidence="1">One of the components of the core complex of photosystem II (PSII). PSII is a light-driven water:plastoquinone oxidoreductase that uses light energy to abstract electrons from H(2)O, generating O(2) and a proton gradient subsequently used for ATP formation. It consists of a core antenna complex that captures photons, and an electron transfer chain that converts photonic excitation into a charge separation.</text>
</comment>
<comment type="subunit">
    <text evidence="1">PSII is composed of 1 copy each of membrane proteins PsbA, PsbB, PsbC, PsbD, PsbE, PsbF, PsbH, PsbI, PsbJ, PsbK, PsbL, PsbM, PsbT, PsbX, PsbY, PsbZ, Psb30/Ycf12, at least 3 peripheral proteins of the oxygen-evolving complex and a large number of cofactors. It forms dimeric complexes.</text>
</comment>
<comment type="subcellular location">
    <subcellularLocation>
        <location evidence="1">Plastid</location>
        <location evidence="1">Chloroplast thylakoid membrane</location>
        <topology evidence="1">Single-pass membrane protein</topology>
    </subcellularLocation>
</comment>
<comment type="similarity">
    <text evidence="1">Belongs to the PsbJ family.</text>
</comment>
<evidence type="ECO:0000255" key="1">
    <source>
        <dbReference type="HAMAP-Rule" id="MF_01305"/>
    </source>
</evidence>
<evidence type="ECO:0000312" key="2">
    <source>
        <dbReference type="Proteomes" id="UP000006591"/>
    </source>
</evidence>
<organism>
    <name type="scientific">Oryza nivara</name>
    <name type="common">Indian wild rice</name>
    <name type="synonym">Oryza sativa f. spontanea</name>
    <dbReference type="NCBI Taxonomy" id="4536"/>
    <lineage>
        <taxon>Eukaryota</taxon>
        <taxon>Viridiplantae</taxon>
        <taxon>Streptophyta</taxon>
        <taxon>Embryophyta</taxon>
        <taxon>Tracheophyta</taxon>
        <taxon>Spermatophyta</taxon>
        <taxon>Magnoliopsida</taxon>
        <taxon>Liliopsida</taxon>
        <taxon>Poales</taxon>
        <taxon>Poaceae</taxon>
        <taxon>BOP clade</taxon>
        <taxon>Oryzoideae</taxon>
        <taxon>Oryzeae</taxon>
        <taxon>Oryzinae</taxon>
        <taxon>Oryza</taxon>
    </lineage>
</organism>
<sequence>MADTTGRIPLWLIGTVTGIAVIGLIGVFFYGSYSGLGSSL</sequence>
<feature type="chain" id="PRO_0000216606" description="Photosystem II reaction center protein J">
    <location>
        <begin position="1"/>
        <end position="40"/>
    </location>
</feature>
<feature type="transmembrane region" description="Helical" evidence="1">
    <location>
        <begin position="8"/>
        <end position="28"/>
    </location>
</feature>
<proteinExistence type="inferred from homology"/>
<reference key="1">
    <citation type="journal article" date="2004" name="Gene">
        <title>The complete nucleotide sequence of wild rice (Oryza nivara) chloroplast genome: first genome wide comparative sequence analysis of wild and cultivated rice.</title>
        <authorList>
            <person name="Masood M.S."/>
            <person name="Nishikawa T."/>
            <person name="Fukuoka S."/>
            <person name="Njenga P.K."/>
            <person name="Tsudzuki T."/>
            <person name="Kadowaki K."/>
        </authorList>
    </citation>
    <scope>NUCLEOTIDE SEQUENCE [LARGE SCALE GENOMIC DNA]</scope>
    <source>
        <strain evidence="2">cv. SL10</strain>
    </source>
</reference>
<geneLocation type="chloroplast"/>
<name>PSBJ_ORYNI</name>
<dbReference type="EMBL" id="AP006728">
    <property type="protein sequence ID" value="BAD26793.1"/>
    <property type="molecule type" value="Genomic_DNA"/>
</dbReference>
<dbReference type="RefSeq" id="YP_052764.1">
    <property type="nucleotide sequence ID" value="NC_005973.1"/>
</dbReference>
<dbReference type="SMR" id="Q6ENF9"/>
<dbReference type="STRING" id="4536.Q6ENF9"/>
<dbReference type="GeneID" id="2885913"/>
<dbReference type="Proteomes" id="UP000006591">
    <property type="component" value="Chloroplast"/>
</dbReference>
<dbReference type="GO" id="GO:0009535">
    <property type="term" value="C:chloroplast thylakoid membrane"/>
    <property type="evidence" value="ECO:0007669"/>
    <property type="project" value="UniProtKB-SubCell"/>
</dbReference>
<dbReference type="GO" id="GO:0009539">
    <property type="term" value="C:photosystem II reaction center"/>
    <property type="evidence" value="ECO:0007669"/>
    <property type="project" value="InterPro"/>
</dbReference>
<dbReference type="GO" id="GO:0009536">
    <property type="term" value="C:plastid"/>
    <property type="evidence" value="ECO:0000305"/>
    <property type="project" value="Gramene"/>
</dbReference>
<dbReference type="GO" id="GO:0015979">
    <property type="term" value="P:photosynthesis"/>
    <property type="evidence" value="ECO:0007669"/>
    <property type="project" value="UniProtKB-UniRule"/>
</dbReference>
<dbReference type="Gene3D" id="6.10.250.2070">
    <property type="match status" value="1"/>
</dbReference>
<dbReference type="HAMAP" id="MF_01305">
    <property type="entry name" value="PSII_PsbJ"/>
    <property type="match status" value="1"/>
</dbReference>
<dbReference type="InterPro" id="IPR002682">
    <property type="entry name" value="PSII_PsbJ"/>
</dbReference>
<dbReference type="InterPro" id="IPR037267">
    <property type="entry name" value="PSII_PsbJ_sf"/>
</dbReference>
<dbReference type="NCBIfam" id="NF002722">
    <property type="entry name" value="PRK02565.1"/>
    <property type="match status" value="1"/>
</dbReference>
<dbReference type="PANTHER" id="PTHR34812">
    <property type="entry name" value="PHOTOSYSTEM II REACTION CENTER PROTEIN J"/>
    <property type="match status" value="1"/>
</dbReference>
<dbReference type="PANTHER" id="PTHR34812:SF3">
    <property type="entry name" value="PHOTOSYSTEM II REACTION CENTER PROTEIN J"/>
    <property type="match status" value="1"/>
</dbReference>
<dbReference type="Pfam" id="PF01788">
    <property type="entry name" value="PsbJ"/>
    <property type="match status" value="1"/>
</dbReference>
<dbReference type="SUPFAM" id="SSF161021">
    <property type="entry name" value="Photosystem II reaction center protein J, PsbJ"/>
    <property type="match status" value="1"/>
</dbReference>
<protein>
    <recommendedName>
        <fullName evidence="1">Photosystem II reaction center protein J</fullName>
        <shortName evidence="1">PSII-J</shortName>
    </recommendedName>
</protein>
<keyword id="KW-0150">Chloroplast</keyword>
<keyword id="KW-0472">Membrane</keyword>
<keyword id="KW-0602">Photosynthesis</keyword>
<keyword id="KW-0604">Photosystem II</keyword>
<keyword id="KW-0934">Plastid</keyword>
<keyword id="KW-0674">Reaction center</keyword>
<keyword id="KW-1185">Reference proteome</keyword>
<keyword id="KW-0793">Thylakoid</keyword>
<keyword id="KW-0812">Transmembrane</keyword>
<keyword id="KW-1133">Transmembrane helix</keyword>
<accession>Q6ENF9</accession>
<gene>
    <name evidence="1" type="primary">psbJ</name>
</gene>